<reference key="1">
    <citation type="journal article" date="2009" name="BMC Genomics">
        <title>Conservation in the face of diversity: multistrain analysis of an intracellular bacterium.</title>
        <authorList>
            <person name="Dark M.J."/>
            <person name="Herndon D.R."/>
            <person name="Kappmeyer L.S."/>
            <person name="Gonzales M.P."/>
            <person name="Nordeen E."/>
            <person name="Palmer G.H."/>
            <person name="Knowles D.P. Jr."/>
            <person name="Brayton K.A."/>
        </authorList>
    </citation>
    <scope>NUCLEOTIDE SEQUENCE [LARGE SCALE GENOMIC DNA]</scope>
    <source>
        <strain>Florida</strain>
    </source>
</reference>
<gene>
    <name evidence="1" type="primary">groEL</name>
    <name evidence="1" type="synonym">groL</name>
    <name type="ordered locus">AMF_725</name>
</gene>
<protein>
    <recommendedName>
        <fullName evidence="1">Chaperonin GroEL</fullName>
        <ecNumber evidence="1">5.6.1.7</ecNumber>
    </recommendedName>
    <alternativeName>
        <fullName evidence="1">60 kDa chaperonin</fullName>
    </alternativeName>
    <alternativeName>
        <fullName evidence="1">Chaperonin-60</fullName>
        <shortName evidence="1">Cpn60</shortName>
    </alternativeName>
</protein>
<feature type="chain" id="PRO_1000147011" description="Chaperonin GroEL">
    <location>
        <begin position="1"/>
        <end position="549"/>
    </location>
</feature>
<feature type="binding site" evidence="1">
    <location>
        <begin position="29"/>
        <end position="32"/>
    </location>
    <ligand>
        <name>ATP</name>
        <dbReference type="ChEBI" id="CHEBI:30616"/>
    </ligand>
</feature>
<feature type="binding site" evidence="1">
    <location>
        <position position="50"/>
    </location>
    <ligand>
        <name>ATP</name>
        <dbReference type="ChEBI" id="CHEBI:30616"/>
    </ligand>
</feature>
<feature type="binding site" evidence="1">
    <location>
        <begin position="86"/>
        <end position="90"/>
    </location>
    <ligand>
        <name>ATP</name>
        <dbReference type="ChEBI" id="CHEBI:30616"/>
    </ligand>
</feature>
<feature type="binding site" evidence="1">
    <location>
        <position position="417"/>
    </location>
    <ligand>
        <name>ATP</name>
        <dbReference type="ChEBI" id="CHEBI:30616"/>
    </ligand>
</feature>
<feature type="binding site" evidence="1">
    <location>
        <position position="499"/>
    </location>
    <ligand>
        <name>ATP</name>
        <dbReference type="ChEBI" id="CHEBI:30616"/>
    </ligand>
</feature>
<proteinExistence type="inferred from homology"/>
<keyword id="KW-0067">ATP-binding</keyword>
<keyword id="KW-0143">Chaperone</keyword>
<keyword id="KW-0963">Cytoplasm</keyword>
<keyword id="KW-0413">Isomerase</keyword>
<keyword id="KW-0547">Nucleotide-binding</keyword>
<keyword id="KW-1185">Reference proteome</keyword>
<sequence length="549" mass="58114">MANVVVTGEALDKSIREVVRILEDAVGCTAGPKGLTVAISKPYGSPEITKDGYKVMKSIKPEEPLAVAIANIITQSASQCNDKVGDGTTTCSILTAKVIEEVSRAKAAGADTISIKNGILKAKEAVLTALLSMKREVASEDEIAQVATISANGDKNIGGKIAQCVREVGKDGVITVEESKGFKDLEVERTDGMQFDRGYLSPYFVTNAEKMLVEFENPYIFLTEKKINLVQSILPVLENVARSGRPLLIIAEDVEGEALSTLVLNKLRGGLQVAAVKAPGFGDRRKDMLGDIAVIAGAKYVVNDELAVKVEDITLDDLGTAKTVRITKDTTTIIGSVDSNADSITSRISQIKSQIEVSSSDYDKEKLKERLAKLSGGVAVLKVGGSSEVEVKERKDRVEDALHATRAAVEEGVVPGGGAALLYTLASLDGIKGKNDDEQLGINIIKRAVCAPIKRIIKNSGSEEAPCVIQHLMKQNDKELIFNVDTMNYANAFASGVMDPLKVVRIAFDLAVSLAAVFMTLNAVVVDVPSKEDTAGGGAAGGMGGMGGF</sequence>
<comment type="function">
    <text evidence="1">Together with its co-chaperonin GroES, plays an essential role in assisting protein folding. The GroEL-GroES system forms a nano-cage that allows encapsulation of the non-native substrate proteins and provides a physical environment optimized to promote and accelerate protein folding.</text>
</comment>
<comment type="catalytic activity">
    <reaction evidence="1">
        <text>ATP + H2O + a folded polypeptide = ADP + phosphate + an unfolded polypeptide.</text>
        <dbReference type="EC" id="5.6.1.7"/>
    </reaction>
</comment>
<comment type="subunit">
    <text evidence="1">Forms a cylinder of 14 subunits composed of two heptameric rings stacked back-to-back. Interacts with the co-chaperonin GroES.</text>
</comment>
<comment type="subcellular location">
    <subcellularLocation>
        <location evidence="1">Cytoplasm</location>
    </subcellularLocation>
</comment>
<comment type="similarity">
    <text evidence="1">Belongs to the chaperonin (HSP60) family.</text>
</comment>
<name>CH60_ANAMF</name>
<accession>B9KJ98</accession>
<evidence type="ECO:0000255" key="1">
    <source>
        <dbReference type="HAMAP-Rule" id="MF_00600"/>
    </source>
</evidence>
<dbReference type="EC" id="5.6.1.7" evidence="1"/>
<dbReference type="EMBL" id="CP001079">
    <property type="protein sequence ID" value="ACM49560.1"/>
    <property type="molecule type" value="Genomic_DNA"/>
</dbReference>
<dbReference type="RefSeq" id="WP_010265648.1">
    <property type="nucleotide sequence ID" value="NC_012026.1"/>
</dbReference>
<dbReference type="SMR" id="B9KJ98"/>
<dbReference type="STRING" id="320483.AMF_725"/>
<dbReference type="GeneID" id="7397906"/>
<dbReference type="KEGG" id="amf:AMF_725"/>
<dbReference type="eggNOG" id="COG0459">
    <property type="taxonomic scope" value="Bacteria"/>
</dbReference>
<dbReference type="HOGENOM" id="CLU_016503_3_0_5"/>
<dbReference type="Proteomes" id="UP000007307">
    <property type="component" value="Chromosome"/>
</dbReference>
<dbReference type="GO" id="GO:0005737">
    <property type="term" value="C:cytoplasm"/>
    <property type="evidence" value="ECO:0007669"/>
    <property type="project" value="UniProtKB-SubCell"/>
</dbReference>
<dbReference type="GO" id="GO:0005524">
    <property type="term" value="F:ATP binding"/>
    <property type="evidence" value="ECO:0007669"/>
    <property type="project" value="UniProtKB-UniRule"/>
</dbReference>
<dbReference type="GO" id="GO:0140662">
    <property type="term" value="F:ATP-dependent protein folding chaperone"/>
    <property type="evidence" value="ECO:0007669"/>
    <property type="project" value="InterPro"/>
</dbReference>
<dbReference type="GO" id="GO:0016853">
    <property type="term" value="F:isomerase activity"/>
    <property type="evidence" value="ECO:0007669"/>
    <property type="project" value="UniProtKB-KW"/>
</dbReference>
<dbReference type="GO" id="GO:0051082">
    <property type="term" value="F:unfolded protein binding"/>
    <property type="evidence" value="ECO:0007669"/>
    <property type="project" value="UniProtKB-UniRule"/>
</dbReference>
<dbReference type="GO" id="GO:0042026">
    <property type="term" value="P:protein refolding"/>
    <property type="evidence" value="ECO:0007669"/>
    <property type="project" value="UniProtKB-UniRule"/>
</dbReference>
<dbReference type="CDD" id="cd03344">
    <property type="entry name" value="GroEL"/>
    <property type="match status" value="1"/>
</dbReference>
<dbReference type="FunFam" id="3.50.7.10:FF:000001">
    <property type="entry name" value="60 kDa chaperonin"/>
    <property type="match status" value="1"/>
</dbReference>
<dbReference type="Gene3D" id="3.50.7.10">
    <property type="entry name" value="GroEL"/>
    <property type="match status" value="1"/>
</dbReference>
<dbReference type="Gene3D" id="1.10.560.10">
    <property type="entry name" value="GroEL-like equatorial domain"/>
    <property type="match status" value="1"/>
</dbReference>
<dbReference type="Gene3D" id="3.30.260.10">
    <property type="entry name" value="TCP-1-like chaperonin intermediate domain"/>
    <property type="match status" value="1"/>
</dbReference>
<dbReference type="HAMAP" id="MF_00600">
    <property type="entry name" value="CH60"/>
    <property type="match status" value="1"/>
</dbReference>
<dbReference type="InterPro" id="IPR018370">
    <property type="entry name" value="Chaperonin_Cpn60_CS"/>
</dbReference>
<dbReference type="InterPro" id="IPR001844">
    <property type="entry name" value="Cpn60/GroEL"/>
</dbReference>
<dbReference type="InterPro" id="IPR002423">
    <property type="entry name" value="Cpn60/GroEL/TCP-1"/>
</dbReference>
<dbReference type="InterPro" id="IPR027409">
    <property type="entry name" value="GroEL-like_apical_dom_sf"/>
</dbReference>
<dbReference type="InterPro" id="IPR027413">
    <property type="entry name" value="GROEL-like_equatorial_sf"/>
</dbReference>
<dbReference type="InterPro" id="IPR027410">
    <property type="entry name" value="TCP-1-like_intermed_sf"/>
</dbReference>
<dbReference type="NCBIfam" id="TIGR02348">
    <property type="entry name" value="GroEL"/>
    <property type="match status" value="1"/>
</dbReference>
<dbReference type="NCBIfam" id="NF000592">
    <property type="entry name" value="PRK00013.1"/>
    <property type="match status" value="1"/>
</dbReference>
<dbReference type="NCBIfam" id="NF009487">
    <property type="entry name" value="PRK12849.1"/>
    <property type="match status" value="1"/>
</dbReference>
<dbReference type="NCBIfam" id="NF009488">
    <property type="entry name" value="PRK12850.1"/>
    <property type="match status" value="1"/>
</dbReference>
<dbReference type="NCBIfam" id="NF009489">
    <property type="entry name" value="PRK12851.1"/>
    <property type="match status" value="1"/>
</dbReference>
<dbReference type="PANTHER" id="PTHR45633">
    <property type="entry name" value="60 KDA HEAT SHOCK PROTEIN, MITOCHONDRIAL"/>
    <property type="match status" value="1"/>
</dbReference>
<dbReference type="Pfam" id="PF00118">
    <property type="entry name" value="Cpn60_TCP1"/>
    <property type="match status" value="1"/>
</dbReference>
<dbReference type="PRINTS" id="PR00298">
    <property type="entry name" value="CHAPERONIN60"/>
</dbReference>
<dbReference type="SUPFAM" id="SSF52029">
    <property type="entry name" value="GroEL apical domain-like"/>
    <property type="match status" value="1"/>
</dbReference>
<dbReference type="SUPFAM" id="SSF48592">
    <property type="entry name" value="GroEL equatorial domain-like"/>
    <property type="match status" value="1"/>
</dbReference>
<dbReference type="SUPFAM" id="SSF54849">
    <property type="entry name" value="GroEL-intermediate domain like"/>
    <property type="match status" value="1"/>
</dbReference>
<dbReference type="PROSITE" id="PS00296">
    <property type="entry name" value="CHAPERONINS_CPN60"/>
    <property type="match status" value="1"/>
</dbReference>
<organism>
    <name type="scientific">Anaplasma marginale (strain Florida)</name>
    <dbReference type="NCBI Taxonomy" id="320483"/>
    <lineage>
        <taxon>Bacteria</taxon>
        <taxon>Pseudomonadati</taxon>
        <taxon>Pseudomonadota</taxon>
        <taxon>Alphaproteobacteria</taxon>
        <taxon>Rickettsiales</taxon>
        <taxon>Anaplasmataceae</taxon>
        <taxon>Anaplasma</taxon>
    </lineage>
</organism>